<proteinExistence type="inferred from homology"/>
<name>CYOE_LEGPC</name>
<organism>
    <name type="scientific">Legionella pneumophila (strain Corby)</name>
    <dbReference type="NCBI Taxonomy" id="400673"/>
    <lineage>
        <taxon>Bacteria</taxon>
        <taxon>Pseudomonadati</taxon>
        <taxon>Pseudomonadota</taxon>
        <taxon>Gammaproteobacteria</taxon>
        <taxon>Legionellales</taxon>
        <taxon>Legionellaceae</taxon>
        <taxon>Legionella</taxon>
    </lineage>
</organism>
<accession>A5IHI2</accession>
<keyword id="KW-0997">Cell inner membrane</keyword>
<keyword id="KW-1003">Cell membrane</keyword>
<keyword id="KW-0350">Heme biosynthesis</keyword>
<keyword id="KW-0472">Membrane</keyword>
<keyword id="KW-0808">Transferase</keyword>
<keyword id="KW-0812">Transmembrane</keyword>
<keyword id="KW-1133">Transmembrane helix</keyword>
<feature type="chain" id="PRO_0000326905" description="Protoheme IX farnesyltransferase">
    <location>
        <begin position="1"/>
        <end position="294"/>
    </location>
</feature>
<feature type="transmembrane region" description="Helical" evidence="1">
    <location>
        <begin position="24"/>
        <end position="44"/>
    </location>
</feature>
<feature type="transmembrane region" description="Helical" evidence="1">
    <location>
        <begin position="48"/>
        <end position="68"/>
    </location>
</feature>
<feature type="transmembrane region" description="Helical" evidence="1">
    <location>
        <begin position="96"/>
        <end position="116"/>
    </location>
</feature>
<feature type="transmembrane region" description="Helical" evidence="1">
    <location>
        <begin position="118"/>
        <end position="138"/>
    </location>
</feature>
<feature type="transmembrane region" description="Helical" evidence="1">
    <location>
        <begin position="145"/>
        <end position="165"/>
    </location>
</feature>
<feature type="transmembrane region" description="Helical" evidence="1">
    <location>
        <begin position="172"/>
        <end position="192"/>
    </location>
</feature>
<feature type="transmembrane region" description="Helical" evidence="1">
    <location>
        <begin position="224"/>
        <end position="244"/>
    </location>
</feature>
<feature type="transmembrane region" description="Helical" evidence="1">
    <location>
        <begin position="245"/>
        <end position="265"/>
    </location>
</feature>
<feature type="transmembrane region" description="Helical" evidence="1">
    <location>
        <begin position="268"/>
        <end position="288"/>
    </location>
</feature>
<sequence>MRTEYAARLPVDWRDYVELCKPRVVLLMLLTVIVGMYLAAPGWVSLRLIAFTLLGIGLCAGSAAAINHLVDRHIDSIMARTKKRPVAYGRVSVKQALWFAVIIGLMGLSLLILFVNQLTALLTFVTLIGYAGVYTGYLKRATSQNIVIGGLAGAAPPLLGWTAVTDQLDPQALLLVLIIFTWTPPHFWALAIYRYKEYQDAEIPMLPVTHGIQFTKLNIYLYTVLLLVVSLLPFVVSMSGWIYLLGALVLGIRFLVWAHKLYFTDKPVVAMQTFRFSILYLMLLFVFLLVDHYF</sequence>
<dbReference type="EC" id="2.5.1.141" evidence="1"/>
<dbReference type="EMBL" id="CP000675">
    <property type="protein sequence ID" value="ABQ56832.1"/>
    <property type="molecule type" value="Genomic_DNA"/>
</dbReference>
<dbReference type="RefSeq" id="WP_010946161.1">
    <property type="nucleotide sequence ID" value="NZ_JAPMSS010000006.1"/>
</dbReference>
<dbReference type="SMR" id="A5IHI2"/>
<dbReference type="GeneID" id="57034416"/>
<dbReference type="KEGG" id="lpc:LPC_2931"/>
<dbReference type="HOGENOM" id="CLU_029631_0_2_6"/>
<dbReference type="UniPathway" id="UPA00834">
    <property type="reaction ID" value="UER00712"/>
</dbReference>
<dbReference type="GO" id="GO:0005886">
    <property type="term" value="C:plasma membrane"/>
    <property type="evidence" value="ECO:0007669"/>
    <property type="project" value="UniProtKB-SubCell"/>
</dbReference>
<dbReference type="GO" id="GO:0008495">
    <property type="term" value="F:protoheme IX farnesyltransferase activity"/>
    <property type="evidence" value="ECO:0007669"/>
    <property type="project" value="UniProtKB-UniRule"/>
</dbReference>
<dbReference type="GO" id="GO:0048034">
    <property type="term" value="P:heme O biosynthetic process"/>
    <property type="evidence" value="ECO:0007669"/>
    <property type="project" value="UniProtKB-UniRule"/>
</dbReference>
<dbReference type="CDD" id="cd13957">
    <property type="entry name" value="PT_UbiA_Cox10"/>
    <property type="match status" value="1"/>
</dbReference>
<dbReference type="FunFam" id="1.10.357.140:FF:000001">
    <property type="entry name" value="Protoheme IX farnesyltransferase"/>
    <property type="match status" value="1"/>
</dbReference>
<dbReference type="Gene3D" id="1.10.357.140">
    <property type="entry name" value="UbiA prenyltransferase"/>
    <property type="match status" value="1"/>
</dbReference>
<dbReference type="HAMAP" id="MF_00154">
    <property type="entry name" value="CyoE_CtaB"/>
    <property type="match status" value="1"/>
</dbReference>
<dbReference type="InterPro" id="IPR006369">
    <property type="entry name" value="Protohaem_IX_farnesylTrfase"/>
</dbReference>
<dbReference type="InterPro" id="IPR000537">
    <property type="entry name" value="UbiA_prenyltransferase"/>
</dbReference>
<dbReference type="InterPro" id="IPR030470">
    <property type="entry name" value="UbiA_prenylTrfase_CS"/>
</dbReference>
<dbReference type="InterPro" id="IPR044878">
    <property type="entry name" value="UbiA_sf"/>
</dbReference>
<dbReference type="NCBIfam" id="TIGR01473">
    <property type="entry name" value="cyoE_ctaB"/>
    <property type="match status" value="1"/>
</dbReference>
<dbReference type="NCBIfam" id="NF003349">
    <property type="entry name" value="PRK04375.1-2"/>
    <property type="match status" value="1"/>
</dbReference>
<dbReference type="PANTHER" id="PTHR43448:SF7">
    <property type="entry name" value="4-HYDROXYBENZOATE SOLANESYLTRANSFERASE"/>
    <property type="match status" value="1"/>
</dbReference>
<dbReference type="PANTHER" id="PTHR43448">
    <property type="entry name" value="PROTOHEME IX FARNESYLTRANSFERASE, MITOCHONDRIAL"/>
    <property type="match status" value="1"/>
</dbReference>
<dbReference type="Pfam" id="PF01040">
    <property type="entry name" value="UbiA"/>
    <property type="match status" value="1"/>
</dbReference>
<dbReference type="PROSITE" id="PS00943">
    <property type="entry name" value="UBIA"/>
    <property type="match status" value="1"/>
</dbReference>
<protein>
    <recommendedName>
        <fullName evidence="1">Protoheme IX farnesyltransferase</fullName>
        <ecNumber evidence="1">2.5.1.141</ecNumber>
    </recommendedName>
    <alternativeName>
        <fullName evidence="1">Heme B farnesyltransferase</fullName>
    </alternativeName>
    <alternativeName>
        <fullName evidence="1">Heme O synthase</fullName>
    </alternativeName>
</protein>
<reference key="1">
    <citation type="submission" date="2006-11" db="EMBL/GenBank/DDBJ databases">
        <title>Identification and characterization of a new conjugation/ type IVA secretion system (trb/tra) of L. pneumophila Corby localized on a mobile genomic island.</title>
        <authorList>
            <person name="Gloeckner G."/>
            <person name="Albert-Weissenberger C."/>
            <person name="Weinmann E."/>
            <person name="Jacobi S."/>
            <person name="Schunder E."/>
            <person name="Steinert M."/>
            <person name="Buchrieser C."/>
            <person name="Hacker J."/>
            <person name="Heuner K."/>
        </authorList>
    </citation>
    <scope>NUCLEOTIDE SEQUENCE [LARGE SCALE GENOMIC DNA]</scope>
    <source>
        <strain>Corby</strain>
    </source>
</reference>
<gene>
    <name evidence="1" type="primary">cyoE</name>
    <name type="ordered locus">LPC_2931</name>
</gene>
<comment type="function">
    <text evidence="1">Converts heme B (protoheme IX) to heme O by substitution of the vinyl group on carbon 2 of heme B porphyrin ring with a hydroxyethyl farnesyl side group.</text>
</comment>
<comment type="catalytic activity">
    <reaction evidence="1">
        <text>heme b + (2E,6E)-farnesyl diphosphate + H2O = Fe(II)-heme o + diphosphate</text>
        <dbReference type="Rhea" id="RHEA:28070"/>
        <dbReference type="ChEBI" id="CHEBI:15377"/>
        <dbReference type="ChEBI" id="CHEBI:33019"/>
        <dbReference type="ChEBI" id="CHEBI:60344"/>
        <dbReference type="ChEBI" id="CHEBI:60530"/>
        <dbReference type="ChEBI" id="CHEBI:175763"/>
        <dbReference type="EC" id="2.5.1.141"/>
    </reaction>
</comment>
<comment type="pathway">
    <text evidence="1">Porphyrin-containing compound metabolism; heme O biosynthesis; heme O from protoheme: step 1/1.</text>
</comment>
<comment type="subcellular location">
    <subcellularLocation>
        <location evidence="1">Cell inner membrane</location>
        <topology evidence="1">Multi-pass membrane protein</topology>
    </subcellularLocation>
</comment>
<comment type="miscellaneous">
    <text evidence="1">Carbon 2 of the heme B porphyrin ring is defined according to the Fischer nomenclature.</text>
</comment>
<comment type="similarity">
    <text evidence="1">Belongs to the UbiA prenyltransferase family. Protoheme IX farnesyltransferase subfamily.</text>
</comment>
<evidence type="ECO:0000255" key="1">
    <source>
        <dbReference type="HAMAP-Rule" id="MF_00154"/>
    </source>
</evidence>